<accession>B6DCX6</accession>
<feature type="signal peptide" evidence="2">
    <location>
        <begin position="1"/>
        <end position="20"/>
    </location>
</feature>
<feature type="propeptide" id="PRO_0000401773" evidence="1">
    <location>
        <begin position="21"/>
        <end position="26"/>
    </location>
</feature>
<feature type="chain" id="PRO_0000401774" description="U8-lycotoxin-Ls1v">
    <location>
        <begin position="27"/>
        <end position="77"/>
    </location>
</feature>
<protein>
    <recommendedName>
        <fullName>U8-lycotoxin-Ls1v</fullName>
    </recommendedName>
    <alternativeName>
        <fullName>Toxin-like structure LSTX-H5</fullName>
    </alternativeName>
</protein>
<evidence type="ECO:0000250" key="1"/>
<evidence type="ECO:0000255" key="2"/>
<evidence type="ECO:0000305" key="3"/>
<proteinExistence type="evidence at transcript level"/>
<sequence>MKLIIFTGLVLFGIVSLIEAQAENEKACLPQYQVCTDAPGNCCSNLVCDCYGRYKSGARIGRNCFCLQKGVIYKRED</sequence>
<organism>
    <name type="scientific">Lycosa singoriensis</name>
    <name type="common">Wolf spider</name>
    <name type="synonym">Aranea singoriensis</name>
    <dbReference type="NCBI Taxonomy" id="434756"/>
    <lineage>
        <taxon>Eukaryota</taxon>
        <taxon>Metazoa</taxon>
        <taxon>Ecdysozoa</taxon>
        <taxon>Arthropoda</taxon>
        <taxon>Chelicerata</taxon>
        <taxon>Arachnida</taxon>
        <taxon>Araneae</taxon>
        <taxon>Araneomorphae</taxon>
        <taxon>Entelegynae</taxon>
        <taxon>Lycosoidea</taxon>
        <taxon>Lycosidae</taxon>
        <taxon>Lycosa</taxon>
    </lineage>
</organism>
<keyword id="KW-1015">Disulfide bond</keyword>
<keyword id="KW-0964">Secreted</keyword>
<keyword id="KW-0732">Signal</keyword>
<keyword id="KW-0800">Toxin</keyword>
<dbReference type="EMBL" id="EU926060">
    <property type="protein sequence ID" value="ACI41392.1"/>
    <property type="molecule type" value="mRNA"/>
</dbReference>
<dbReference type="EMBL" id="FM864064">
    <property type="protein sequence ID" value="CAS03661.1"/>
    <property type="molecule type" value="mRNA"/>
</dbReference>
<dbReference type="SMR" id="B6DCX6"/>
<dbReference type="ArachnoServer" id="AS000999">
    <property type="toxin name" value="U8-lycotoxin-Ls1v"/>
</dbReference>
<dbReference type="GO" id="GO:0005576">
    <property type="term" value="C:extracellular region"/>
    <property type="evidence" value="ECO:0007669"/>
    <property type="project" value="UniProtKB-SubCell"/>
</dbReference>
<dbReference type="GO" id="GO:0090729">
    <property type="term" value="F:toxin activity"/>
    <property type="evidence" value="ECO:0007669"/>
    <property type="project" value="UniProtKB-KW"/>
</dbReference>
<dbReference type="InterPro" id="IPR019553">
    <property type="entry name" value="Spider_toxin_CSTX_knottin"/>
</dbReference>
<dbReference type="Pfam" id="PF10530">
    <property type="entry name" value="Toxin_35"/>
    <property type="match status" value="1"/>
</dbReference>
<comment type="subcellular location">
    <subcellularLocation>
        <location evidence="1">Secreted</location>
    </subcellularLocation>
</comment>
<comment type="tissue specificity">
    <text>Expressed by the venom gland.</text>
</comment>
<comment type="PTM">
    <text evidence="1">Contains 4 disulfide bonds.</text>
</comment>
<comment type="similarity">
    <text evidence="3">Belongs to the neurotoxin 19 (CSTX) family. 08 (U8-Lctx) subfamily.</text>
</comment>
<name>TX805_LYCSI</name>
<reference key="1">
    <citation type="journal article" date="2010" name="Zoology">
        <title>Transcriptome analysis of the venom glands of the Chinese wolf spider Lycosa singoriensis.</title>
        <authorList>
            <person name="Zhang Y."/>
            <person name="Chen J."/>
            <person name="Tang X."/>
            <person name="Wang F."/>
            <person name="Jiang L."/>
            <person name="Xiong X."/>
            <person name="Wang M."/>
            <person name="Rong M."/>
            <person name="Liu Z."/>
            <person name="Liang S."/>
        </authorList>
    </citation>
    <scope>NUCLEOTIDE SEQUENCE [LARGE SCALE MRNA]</scope>
    <source>
        <tissue>Venom gland</tissue>
    </source>
</reference>